<sequence length="321" mass="36051">MSLVCSLSCVAPLPQTKQSRPSFLKLETCTLSLSSPAGYPNFTTGIRKHISYLFTEPIKLPRLAKSRILVSQESFTETSTIDMDWEDQEEIEDTGSPWEGSVMYRRNASVTHVEYCTTLERLGLGRLSTDVSKKRASAMGLRVTKDVKDYPDGTPVQVSVDVIRKKKKLRLDGIVRTVITLGCNRCGESTGESIFSNFSLLLTEEPVEEPDVIDLGFTFGNDKEEGEDDDDNDDSWIDWEDKLHFPPEVKEIDISKHIRDLVHLEITITAICDSACKGMCLKCGANLNKRKCDCGREEKDKGYGPLGNLREQMQQKEGLRN</sequence>
<comment type="function">
    <text evidence="3">Plays a role in synthesis, processing and/or stability of 23S rRNA. Required for embryogenesis.</text>
</comment>
<comment type="subcellular location">
    <subcellularLocation>
        <location evidence="3">Plastid</location>
        <location evidence="3">Chloroplast stroma</location>
        <location evidence="3">Chloroplast nucleoid</location>
    </subcellularLocation>
</comment>
<comment type="disruption phenotype">
    <text evidence="3">Embryo lethal.</text>
</comment>
<comment type="similarity">
    <text evidence="5">Belongs to the DUF177 domain family.</text>
</comment>
<protein>
    <recommendedName>
        <fullName evidence="5">Large ribosomal RNA subunit accumulation protein YCED homolog 1, chloroplastic</fullName>
    </recommendedName>
    <alternativeName>
        <fullName evidence="1">23S rRNA accumulation protein YCED</fullName>
    </alternativeName>
    <alternativeName>
        <fullName evidence="4">Protein DUF177A</fullName>
    </alternativeName>
</protein>
<organism evidence="8">
    <name type="scientific">Arabidopsis thaliana</name>
    <name type="common">Mouse-ear cress</name>
    <dbReference type="NCBI Taxonomy" id="3702"/>
    <lineage>
        <taxon>Eukaryota</taxon>
        <taxon>Viridiplantae</taxon>
        <taxon>Streptophyta</taxon>
        <taxon>Embryophyta</taxon>
        <taxon>Tracheophyta</taxon>
        <taxon>Spermatophyta</taxon>
        <taxon>Magnoliopsida</taxon>
        <taxon>eudicotyledons</taxon>
        <taxon>Gunneridae</taxon>
        <taxon>Pentapetalae</taxon>
        <taxon>rosids</taxon>
        <taxon>malvids</taxon>
        <taxon>Brassicales</taxon>
        <taxon>Brassicaceae</taxon>
        <taxon>Camelineae</taxon>
        <taxon>Arabidopsis</taxon>
    </lineage>
</organism>
<reference key="1">
    <citation type="journal article" date="2000" name="DNA Res.">
        <title>Structural analysis of Arabidopsis thaliana chromosome 3. I. Sequence features of the regions of 4,504,864 bp covered by sixty P1 and TAC clones.</title>
        <authorList>
            <person name="Sato S."/>
            <person name="Nakamura Y."/>
            <person name="Kaneko T."/>
            <person name="Katoh T."/>
            <person name="Asamizu E."/>
            <person name="Tabata S."/>
        </authorList>
    </citation>
    <scope>NUCLEOTIDE SEQUENCE [LARGE SCALE GENOMIC DNA]</scope>
    <source>
        <strain>cv. Columbia</strain>
    </source>
</reference>
<reference key="2">
    <citation type="journal article" date="2017" name="Plant J.">
        <title>Araport11: a complete reannotation of the Arabidopsis thaliana reference genome.</title>
        <authorList>
            <person name="Cheng C.Y."/>
            <person name="Krishnakumar V."/>
            <person name="Chan A.P."/>
            <person name="Thibaud-Nissen F."/>
            <person name="Schobel S."/>
            <person name="Town C.D."/>
        </authorList>
    </citation>
    <scope>GENOME REANNOTATION</scope>
    <source>
        <strain>cv. Columbia</strain>
    </source>
</reference>
<reference evidence="7" key="3">
    <citation type="submission" date="2006-07" db="EMBL/GenBank/DDBJ databases">
        <title>Arabidopsis ORF clones.</title>
        <authorList>
            <person name="Kim C.J."/>
            <person name="Chen H."/>
            <person name="Quinitio C."/>
            <person name="Shinn P."/>
            <person name="Ecker J.R."/>
        </authorList>
    </citation>
    <scope>NUCLEOTIDE SEQUENCE [MRNA]</scope>
    <source>
        <strain>cv. Columbia</strain>
    </source>
</reference>
<reference key="4">
    <citation type="submission" date="2006-07" db="EMBL/GenBank/DDBJ databases">
        <title>Large-scale analysis of RIKEN Arabidopsis full-length (RAFL) cDNAs.</title>
        <authorList>
            <person name="Totoki Y."/>
            <person name="Seki M."/>
            <person name="Ishida J."/>
            <person name="Nakajima M."/>
            <person name="Enju A."/>
            <person name="Kamiya A."/>
            <person name="Narusaka M."/>
            <person name="Shin-i T."/>
            <person name="Nakagawa M."/>
            <person name="Sakamoto N."/>
            <person name="Oishi K."/>
            <person name="Kohara Y."/>
            <person name="Kobayashi M."/>
            <person name="Toyoda A."/>
            <person name="Sakaki Y."/>
            <person name="Sakurai T."/>
            <person name="Iida K."/>
            <person name="Akiyama K."/>
            <person name="Satou M."/>
            <person name="Toyoda T."/>
            <person name="Konagaya A."/>
            <person name="Carninci P."/>
            <person name="Kawai J."/>
            <person name="Hayashizaki Y."/>
            <person name="Shinozaki K."/>
        </authorList>
    </citation>
    <scope>NUCLEOTIDE SEQUENCE [LARGE SCALE MRNA]</scope>
    <source>
        <strain>cv. Columbia</strain>
    </source>
</reference>
<reference key="5">
    <citation type="submission" date="2002-03" db="EMBL/GenBank/DDBJ databases">
        <title>Full-length cDNA from Arabidopsis thaliana.</title>
        <authorList>
            <person name="Brover V.V."/>
            <person name="Troukhan M.E."/>
            <person name="Alexandrov N.A."/>
            <person name="Lu Y.-P."/>
            <person name="Flavell R.B."/>
            <person name="Feldmann K.A."/>
        </authorList>
    </citation>
    <scope>NUCLEOTIDE SEQUENCE [LARGE SCALE MRNA]</scope>
</reference>
<reference key="6">
    <citation type="journal article" date="2016" name="J. Exp. Bot.">
        <title>Essential role of conserved DUF177A protein in plastid 23S rRNA accumulation and plant embryogenesis.</title>
        <authorList>
            <person name="Yang J."/>
            <person name="Suzuki M."/>
            <person name="McCarty D.R."/>
        </authorList>
    </citation>
    <scope>FUNCTION</scope>
    <scope>DISRUPTION PHENOTYPE</scope>
    <scope>SUBCELLULAR LOCATION</scope>
</reference>
<gene>
    <name evidence="6" type="ordered locus">At3g19810</name>
    <name evidence="8" type="ORF">MPN9.5</name>
</gene>
<dbReference type="EMBL" id="AB025631">
    <property type="protein sequence ID" value="BAB01295.1"/>
    <property type="molecule type" value="Genomic_DNA"/>
</dbReference>
<dbReference type="EMBL" id="CP002686">
    <property type="protein sequence ID" value="AEE76292.1"/>
    <property type="molecule type" value="Genomic_DNA"/>
</dbReference>
<dbReference type="EMBL" id="CP002686">
    <property type="protein sequence ID" value="ANM65252.1"/>
    <property type="molecule type" value="Genomic_DNA"/>
</dbReference>
<dbReference type="EMBL" id="AY088199">
    <property type="protein sequence ID" value="AAM65741.1"/>
    <property type="molecule type" value="mRNA"/>
</dbReference>
<dbReference type="EMBL" id="BT026117">
    <property type="protein sequence ID" value="ABG48473.1"/>
    <property type="molecule type" value="mRNA"/>
</dbReference>
<dbReference type="EMBL" id="AK226924">
    <property type="protein sequence ID" value="BAE98996.1"/>
    <property type="molecule type" value="mRNA"/>
</dbReference>
<dbReference type="RefSeq" id="NP_001327235.1">
    <property type="nucleotide sequence ID" value="NM_001338419.1"/>
</dbReference>
<dbReference type="RefSeq" id="NP_566649.1">
    <property type="nucleotide sequence ID" value="NM_112871.4"/>
</dbReference>
<dbReference type="FunCoup" id="Q9LT27">
    <property type="interactions" value="1032"/>
</dbReference>
<dbReference type="STRING" id="3702.Q9LT27"/>
<dbReference type="PaxDb" id="3702-AT3G19810.1"/>
<dbReference type="ProteomicsDB" id="242303"/>
<dbReference type="EnsemblPlants" id="AT3G19810.1">
    <property type="protein sequence ID" value="AT3G19810.1"/>
    <property type="gene ID" value="AT3G19810"/>
</dbReference>
<dbReference type="EnsemblPlants" id="AT3G19810.2">
    <property type="protein sequence ID" value="AT3G19810.2"/>
    <property type="gene ID" value="AT3G19810"/>
</dbReference>
<dbReference type="GeneID" id="821518"/>
<dbReference type="Gramene" id="AT3G19810.1">
    <property type="protein sequence ID" value="AT3G19810.1"/>
    <property type="gene ID" value="AT3G19810"/>
</dbReference>
<dbReference type="Gramene" id="AT3G19810.2">
    <property type="protein sequence ID" value="AT3G19810.2"/>
    <property type="gene ID" value="AT3G19810"/>
</dbReference>
<dbReference type="KEGG" id="ath:AT3G19810"/>
<dbReference type="Araport" id="AT3G19810"/>
<dbReference type="TAIR" id="AT3G19810">
    <property type="gene designation" value="DUF177A"/>
</dbReference>
<dbReference type="eggNOG" id="ENOG502QUUH">
    <property type="taxonomic scope" value="Eukaryota"/>
</dbReference>
<dbReference type="HOGENOM" id="CLU_074940_0_0_1"/>
<dbReference type="InParanoid" id="Q9LT27"/>
<dbReference type="OMA" id="AECVFSN"/>
<dbReference type="OrthoDB" id="1931432at2759"/>
<dbReference type="PhylomeDB" id="Q9LT27"/>
<dbReference type="PRO" id="PR:Q9LT27"/>
<dbReference type="Proteomes" id="UP000006548">
    <property type="component" value="Chromosome 3"/>
</dbReference>
<dbReference type="ExpressionAtlas" id="Q9LT27">
    <property type="expression patterns" value="baseline and differential"/>
</dbReference>
<dbReference type="GO" id="GO:0009507">
    <property type="term" value="C:chloroplast"/>
    <property type="evidence" value="ECO:0000314"/>
    <property type="project" value="TAIR"/>
</dbReference>
<dbReference type="GO" id="GO:0042644">
    <property type="term" value="C:chloroplast nucleoid"/>
    <property type="evidence" value="ECO:0007669"/>
    <property type="project" value="UniProtKB-SubCell"/>
</dbReference>
<dbReference type="GO" id="GO:0042254">
    <property type="term" value="P:ribosome biogenesis"/>
    <property type="evidence" value="ECO:0007669"/>
    <property type="project" value="UniProtKB-KW"/>
</dbReference>
<dbReference type="InterPro" id="IPR003772">
    <property type="entry name" value="YceD"/>
</dbReference>
<dbReference type="PANTHER" id="PTHR34374">
    <property type="entry name" value="LARGE RIBOSOMAL RNA SUBUNIT ACCUMULATION PROTEIN YCED HOMOLOG 1, CHLOROPLASTIC"/>
    <property type="match status" value="1"/>
</dbReference>
<dbReference type="PANTHER" id="PTHR34374:SF1">
    <property type="entry name" value="LARGE RIBOSOMAL RNA SUBUNIT ACCUMULATION PROTEIN YCED HOMOLOG 1, CHLOROPLASTIC"/>
    <property type="match status" value="1"/>
</dbReference>
<dbReference type="Pfam" id="PF02620">
    <property type="entry name" value="YceD"/>
    <property type="match status" value="1"/>
</dbReference>
<keyword id="KW-0150">Chloroplast</keyword>
<keyword id="KW-0934">Plastid</keyword>
<keyword id="KW-1185">Reference proteome</keyword>
<keyword id="KW-0690">Ribosome biogenesis</keyword>
<keyword id="KW-0809">Transit peptide</keyword>
<feature type="transit peptide" description="Chloroplast" evidence="2">
    <location>
        <begin position="1"/>
        <end position="32"/>
    </location>
</feature>
<feature type="chain" id="PRO_0000439065" description="Large ribosomal RNA subunit accumulation protein YCED homolog 1, chloroplastic">
    <location>
        <begin position="33"/>
        <end position="321"/>
    </location>
</feature>
<proteinExistence type="evidence at transcript level"/>
<name>YCED1_ARATH</name>
<accession>Q9LT27</accession>
<evidence type="ECO:0000250" key="1">
    <source>
        <dbReference type="UniProtKB" id="P0AB28"/>
    </source>
</evidence>
<evidence type="ECO:0000255" key="2"/>
<evidence type="ECO:0000269" key="3">
    <source>
    </source>
</evidence>
<evidence type="ECO:0000303" key="4">
    <source>
    </source>
</evidence>
<evidence type="ECO:0000305" key="5"/>
<evidence type="ECO:0000312" key="6">
    <source>
        <dbReference type="Araport" id="AT3G19810"/>
    </source>
</evidence>
<evidence type="ECO:0000312" key="7">
    <source>
        <dbReference type="EMBL" id="ABG48473.1"/>
    </source>
</evidence>
<evidence type="ECO:0000312" key="8">
    <source>
        <dbReference type="EMBL" id="BAB01295.1"/>
    </source>
</evidence>